<comment type="function">
    <text evidence="1 2">Aldo-keto reductase (AKR) that displays broad substrate specificity in vitro. Is able to reduce the standard AKR substrates DL-glyceraldehyde, D-erythrose, methylglyoxal, p-nitrobenzaldehyde, benzaldehyde and butyraldehyde, in the presence of NADPH. Cannot use NADH as a cosubstrate. Does not act on glucose, 2-pyridine carboxyaldehyde, fructose and xylose. The physiological function of this enzyme is not clear. May play a role in bacterial stress response and/or in detoxification of reactive aldehydes.</text>
</comment>
<comment type="biophysicochemical properties">
    <kinetics>
        <KM evidence="1">2.2 mM for DL-glyceraldehyde</KM>
        <KM evidence="1">0.67 mM for p-nitrobenzaldehyde</KM>
        <KM evidence="1">12.2 uM for NADPH</KM>
        <KM evidence="2">0.54 mM for D-erythrose</KM>
        <KM evidence="2">0.74 mM for methylglyoxal</KM>
        <KM evidence="2">1.91 mM for benzaldehyde</KM>
        <KM evidence="2">1.51 mM for butyraldehyde</KM>
        <text evidence="1 2">kcat is 1.37 sec(-1) with DL-glyceraldehyde as substrate (PubMed:12554958). kcat is 1.09 sec(-1) with p-nitrobenzaldehyde as substrate (PubMed:12554958). kcat is 4.02 sec(-1) with D-erythrose as substrate (PubMed:15019785). kcat is 5.33 sec(-1) with methylglyoxal as substrate (PubMed:15019785). kcat is 2.59 sec(-1) with benzaldehyde as substrate (PubMed:15019785). kcat is 3.96 sec(-1) with butyraldehyde as substrate (PubMed:15019785).</text>
    </kinetics>
</comment>
<comment type="subunit">
    <text evidence="1">Monomer.</text>
</comment>
<comment type="induction">
    <text evidence="3">Is under the control of the sigma-B transcription factor. Is induced by heat shock, salt stress, oxidative stress, glucose limitation and oxygen limitation.</text>
</comment>
<comment type="similarity">
    <text evidence="7">Belongs to the aldo/keto reductase family. Aldo/keto reductase 11 subfamily.</text>
</comment>
<keyword id="KW-0002">3D-structure</keyword>
<keyword id="KW-0903">Direct protein sequencing</keyword>
<keyword id="KW-0521">NADP</keyword>
<keyword id="KW-0560">Oxidoreductase</keyword>
<keyword id="KW-1185">Reference proteome</keyword>
<keyword id="KW-0346">Stress response</keyword>
<proteinExistence type="evidence at protein level"/>
<evidence type="ECO:0000269" key="1">
    <source>
    </source>
</evidence>
<evidence type="ECO:0000269" key="2">
    <source>
    </source>
</evidence>
<evidence type="ECO:0000269" key="3">
    <source>
    </source>
</evidence>
<evidence type="ECO:0000303" key="4">
    <source>
    </source>
</evidence>
<evidence type="ECO:0000303" key="5">
    <source>
    </source>
</evidence>
<evidence type="ECO:0000305" key="6"/>
<evidence type="ECO:0000305" key="7">
    <source>
    </source>
</evidence>
<evidence type="ECO:0000305" key="8">
    <source>
    </source>
</evidence>
<evidence type="ECO:0007744" key="9">
    <source>
        <dbReference type="PDB" id="1PZ1"/>
    </source>
</evidence>
<evidence type="ECO:0007829" key="10">
    <source>
        <dbReference type="PDB" id="1PZ1"/>
    </source>
</evidence>
<feature type="chain" id="PRO_0000070388" description="Aldo-keto reductase YhdN">
    <location>
        <begin position="1"/>
        <end position="331"/>
    </location>
</feature>
<feature type="active site" description="Proton donor" evidence="8">
    <location>
        <position position="57"/>
    </location>
</feature>
<feature type="binding site" evidence="2 9">
    <location>
        <begin position="20"/>
        <end position="21"/>
    </location>
    <ligand>
        <name>NADP(+)</name>
        <dbReference type="ChEBI" id="CHEBI:58349"/>
    </ligand>
</feature>
<feature type="binding site" evidence="2 9">
    <location>
        <position position="52"/>
    </location>
    <ligand>
        <name>NADP(+)</name>
        <dbReference type="ChEBI" id="CHEBI:58349"/>
    </ligand>
</feature>
<feature type="binding site" evidence="2 9">
    <location>
        <position position="175"/>
    </location>
    <ligand>
        <name>NADP(+)</name>
        <dbReference type="ChEBI" id="CHEBI:58349"/>
    </ligand>
</feature>
<feature type="binding site" evidence="2 9">
    <location>
        <begin position="203"/>
        <end position="208"/>
    </location>
    <ligand>
        <name>NADP(+)</name>
        <dbReference type="ChEBI" id="CHEBI:58349"/>
    </ligand>
</feature>
<feature type="binding site" evidence="2 9">
    <location>
        <position position="214"/>
    </location>
    <ligand>
        <name>NADP(+)</name>
        <dbReference type="ChEBI" id="CHEBI:58349"/>
    </ligand>
</feature>
<feature type="binding site" evidence="2 9">
    <location>
        <position position="227"/>
    </location>
    <ligand>
        <name>NADP(+)</name>
        <dbReference type="ChEBI" id="CHEBI:58349"/>
    </ligand>
</feature>
<feature type="binding site" evidence="2 9">
    <location>
        <begin position="280"/>
        <end position="282"/>
    </location>
    <ligand>
        <name>NADP(+)</name>
        <dbReference type="ChEBI" id="CHEBI:58349"/>
    </ligand>
</feature>
<feature type="binding site" evidence="2 9">
    <location>
        <position position="286"/>
    </location>
    <ligand>
        <name>NADP(+)</name>
        <dbReference type="ChEBI" id="CHEBI:58349"/>
    </ligand>
</feature>
<feature type="site" description="Lowers pKa of active site Tyr" evidence="8">
    <location>
        <position position="84"/>
    </location>
</feature>
<feature type="sequence conflict" description="In Ref. 3; AA sequence." evidence="6" ref="3">
    <original>G</original>
    <variation>K</variation>
    <location>
        <position position="25"/>
    </location>
</feature>
<feature type="strand" evidence="10">
    <location>
        <begin position="3"/>
        <end position="5"/>
    </location>
</feature>
<feature type="strand" evidence="10">
    <location>
        <begin position="12"/>
        <end position="19"/>
    </location>
</feature>
<feature type="helix" evidence="10">
    <location>
        <begin position="22"/>
        <end position="24"/>
    </location>
</feature>
<feature type="turn" evidence="10">
    <location>
        <begin position="26"/>
        <end position="29"/>
    </location>
</feature>
<feature type="helix" evidence="10">
    <location>
        <begin position="33"/>
        <end position="45"/>
    </location>
</feature>
<feature type="strand" evidence="10">
    <location>
        <begin position="50"/>
        <end position="52"/>
    </location>
</feature>
<feature type="helix" evidence="10">
    <location>
        <begin position="57"/>
        <end position="60"/>
    </location>
</feature>
<feature type="helix" evidence="10">
    <location>
        <begin position="61"/>
        <end position="73"/>
    </location>
</feature>
<feature type="helix" evidence="10">
    <location>
        <begin position="76"/>
        <end position="78"/>
    </location>
</feature>
<feature type="strand" evidence="10">
    <location>
        <begin position="80"/>
        <end position="85"/>
    </location>
</feature>
<feature type="strand" evidence="10">
    <location>
        <begin position="87"/>
        <end position="92"/>
    </location>
</feature>
<feature type="strand" evidence="10">
    <location>
        <begin position="94"/>
        <end position="96"/>
    </location>
</feature>
<feature type="helix" evidence="10">
    <location>
        <begin position="100"/>
        <end position="113"/>
    </location>
</feature>
<feature type="strand" evidence="10">
    <location>
        <begin position="119"/>
        <end position="124"/>
    </location>
</feature>
<feature type="helix" evidence="10">
    <location>
        <begin position="133"/>
        <end position="145"/>
    </location>
</feature>
<feature type="strand" evidence="10">
    <location>
        <begin position="148"/>
        <end position="150"/>
    </location>
</feature>
<feature type="strand" evidence="10">
    <location>
        <begin position="152"/>
        <end position="154"/>
    </location>
</feature>
<feature type="helix" evidence="10">
    <location>
        <begin position="159"/>
        <end position="166"/>
    </location>
</feature>
<feature type="helix" evidence="10">
    <location>
        <begin position="184"/>
        <end position="186"/>
    </location>
</feature>
<feature type="helix" evidence="10">
    <location>
        <begin position="189"/>
        <end position="195"/>
    </location>
</feature>
<feature type="strand" evidence="10">
    <location>
        <begin position="199"/>
        <end position="203"/>
    </location>
</feature>
<feature type="helix" evidence="10">
    <location>
        <begin position="207"/>
        <end position="209"/>
    </location>
</feature>
<feature type="helix" evidence="10">
    <location>
        <begin position="226"/>
        <end position="228"/>
    </location>
</feature>
<feature type="helix" evidence="10">
    <location>
        <begin position="231"/>
        <end position="233"/>
    </location>
</feature>
<feature type="turn" evidence="10">
    <location>
        <begin position="235"/>
        <end position="237"/>
    </location>
</feature>
<feature type="helix" evidence="10">
    <location>
        <begin position="238"/>
        <end position="256"/>
    </location>
</feature>
<feature type="helix" evidence="10">
    <location>
        <begin position="260"/>
        <end position="269"/>
    </location>
</feature>
<feature type="strand" evidence="10">
    <location>
        <begin position="276"/>
        <end position="280"/>
    </location>
</feature>
<feature type="helix" evidence="10">
    <location>
        <begin position="284"/>
        <end position="287"/>
    </location>
</feature>
<feature type="strand" evidence="10">
    <location>
        <begin position="293"/>
        <end position="295"/>
    </location>
</feature>
<feature type="helix" evidence="10">
    <location>
        <begin position="300"/>
        <end position="313"/>
    </location>
</feature>
<feature type="helix" evidence="10">
    <location>
        <begin position="321"/>
        <end position="323"/>
    </location>
</feature>
<dbReference type="EC" id="1.1.1.-" evidence="1 2"/>
<dbReference type="EMBL" id="Y14082">
    <property type="protein sequence ID" value="CAA74498.1"/>
    <property type="molecule type" value="Genomic_DNA"/>
</dbReference>
<dbReference type="EMBL" id="AL009126">
    <property type="protein sequence ID" value="CAB12792.1"/>
    <property type="molecule type" value="Genomic_DNA"/>
</dbReference>
<dbReference type="PIR" id="D69826">
    <property type="entry name" value="D69826"/>
</dbReference>
<dbReference type="RefSeq" id="WP_003245422.1">
    <property type="nucleotide sequence ID" value="NZ_OZ025638.1"/>
</dbReference>
<dbReference type="PDB" id="1PZ1">
    <property type="method" value="X-ray"/>
    <property type="resolution" value="2.20 A"/>
    <property type="chains" value="A/B=1-331"/>
</dbReference>
<dbReference type="PDBsum" id="1PZ1"/>
<dbReference type="SMR" id="P80874"/>
<dbReference type="FunCoup" id="P80874">
    <property type="interactions" value="201"/>
</dbReference>
<dbReference type="STRING" id="224308.BSU09530"/>
<dbReference type="DrugBank" id="DB03461">
    <property type="generic name" value="Nicotinamide adenine dinucleotide phosphate"/>
</dbReference>
<dbReference type="TCDB" id="8.A.5.1.4">
    <property type="family name" value="the voltage-gated k(+) channel Beta-subunit (kvBeta) family"/>
</dbReference>
<dbReference type="PaxDb" id="224308-BSU09530"/>
<dbReference type="EnsemblBacteria" id="CAB12792">
    <property type="protein sequence ID" value="CAB12792"/>
    <property type="gene ID" value="BSU_09530"/>
</dbReference>
<dbReference type="GeneID" id="939270"/>
<dbReference type="KEGG" id="bsu:BSU09530"/>
<dbReference type="PATRIC" id="fig|224308.179.peg.1026"/>
<dbReference type="eggNOG" id="COG0667">
    <property type="taxonomic scope" value="Bacteria"/>
</dbReference>
<dbReference type="InParanoid" id="P80874"/>
<dbReference type="OrthoDB" id="9773828at2"/>
<dbReference type="PhylomeDB" id="P80874"/>
<dbReference type="BioCyc" id="BSUB:BSU09530-MONOMER"/>
<dbReference type="SABIO-RK" id="P80874"/>
<dbReference type="EvolutionaryTrace" id="P80874"/>
<dbReference type="Proteomes" id="UP000001570">
    <property type="component" value="Chromosome"/>
</dbReference>
<dbReference type="GO" id="GO:0005829">
    <property type="term" value="C:cytosol"/>
    <property type="evidence" value="ECO:0000318"/>
    <property type="project" value="GO_Central"/>
</dbReference>
<dbReference type="GO" id="GO:0016491">
    <property type="term" value="F:oxidoreductase activity"/>
    <property type="evidence" value="ECO:0007669"/>
    <property type="project" value="UniProtKB-KW"/>
</dbReference>
<dbReference type="CDD" id="cd19148">
    <property type="entry name" value="AKR_AKR11B1"/>
    <property type="match status" value="1"/>
</dbReference>
<dbReference type="FunFam" id="3.20.20.100:FF:000004">
    <property type="entry name" value="Oxidoreductase, aldo/keto reductase"/>
    <property type="match status" value="1"/>
</dbReference>
<dbReference type="Gene3D" id="3.20.20.100">
    <property type="entry name" value="NADP-dependent oxidoreductase domain"/>
    <property type="match status" value="1"/>
</dbReference>
<dbReference type="InterPro" id="IPR020471">
    <property type="entry name" value="AKR"/>
</dbReference>
<dbReference type="InterPro" id="IPR050523">
    <property type="entry name" value="AKR_Detox_Biosynth"/>
</dbReference>
<dbReference type="InterPro" id="IPR018170">
    <property type="entry name" value="Aldo/ket_reductase_CS"/>
</dbReference>
<dbReference type="InterPro" id="IPR023210">
    <property type="entry name" value="NADP_OxRdtase_dom"/>
</dbReference>
<dbReference type="InterPro" id="IPR036812">
    <property type="entry name" value="NADP_OxRdtase_dom_sf"/>
</dbReference>
<dbReference type="PANTHER" id="PTHR43364:SF4">
    <property type="entry name" value="NAD(P)-LINKED OXIDOREDUCTASE SUPERFAMILY PROTEIN"/>
    <property type="match status" value="1"/>
</dbReference>
<dbReference type="PANTHER" id="PTHR43364">
    <property type="entry name" value="NADH-SPECIFIC METHYLGLYOXAL REDUCTASE-RELATED"/>
    <property type="match status" value="1"/>
</dbReference>
<dbReference type="Pfam" id="PF00248">
    <property type="entry name" value="Aldo_ket_red"/>
    <property type="match status" value="1"/>
</dbReference>
<dbReference type="PRINTS" id="PR00069">
    <property type="entry name" value="ALDKETRDTASE"/>
</dbReference>
<dbReference type="SUPFAM" id="SSF51430">
    <property type="entry name" value="NAD(P)-linked oxidoreductase"/>
    <property type="match status" value="1"/>
</dbReference>
<dbReference type="PROSITE" id="PS00062">
    <property type="entry name" value="ALDOKETO_REDUCTASE_2"/>
    <property type="match status" value="1"/>
</dbReference>
<protein>
    <recommendedName>
        <fullName evidence="7">Aldo-keto reductase YhdN</fullName>
        <ecNumber evidence="1 2">1.1.1.-</ecNumber>
    </recommendedName>
    <alternativeName>
        <fullName evidence="4">AKR11B</fullName>
    </alternativeName>
    <alternativeName>
        <fullName evidence="5">General stress protein 69</fullName>
        <shortName evidence="5">GSP69</shortName>
    </alternativeName>
</protein>
<name>GS69_BACSU</name>
<organism>
    <name type="scientific">Bacillus subtilis (strain 168)</name>
    <dbReference type="NCBI Taxonomy" id="224308"/>
    <lineage>
        <taxon>Bacteria</taxon>
        <taxon>Bacillati</taxon>
        <taxon>Bacillota</taxon>
        <taxon>Bacilli</taxon>
        <taxon>Bacillales</taxon>
        <taxon>Bacillaceae</taxon>
        <taxon>Bacillus</taxon>
    </lineage>
</organism>
<gene>
    <name type="primary">yhdN</name>
    <name type="ordered locus">BSU09530</name>
</gene>
<reference key="1">
    <citation type="journal article" date="1998" name="Microbiology">
        <title>The 172 kb prkA-addAB region from 83 degrees to 97 degrees of the Bacillus subtilis chromosome contains several dysfunctional genes, the glyB marker, many genes encoding transporter proteins, and the ubiquitous hit gene.</title>
        <authorList>
            <person name="Noback M.A."/>
            <person name="Holsappel S."/>
            <person name="Kiewiet R."/>
            <person name="Terpstra P."/>
            <person name="Wambutt R."/>
            <person name="Wedler H."/>
            <person name="Venema G."/>
            <person name="Bron S."/>
        </authorList>
    </citation>
    <scope>NUCLEOTIDE SEQUENCE [GENOMIC DNA]</scope>
    <source>
        <strain>168</strain>
    </source>
</reference>
<reference key="2">
    <citation type="journal article" date="1997" name="Nature">
        <title>The complete genome sequence of the Gram-positive bacterium Bacillus subtilis.</title>
        <authorList>
            <person name="Kunst F."/>
            <person name="Ogasawara N."/>
            <person name="Moszer I."/>
            <person name="Albertini A.M."/>
            <person name="Alloni G."/>
            <person name="Azevedo V."/>
            <person name="Bertero M.G."/>
            <person name="Bessieres P."/>
            <person name="Bolotin A."/>
            <person name="Borchert S."/>
            <person name="Borriss R."/>
            <person name="Boursier L."/>
            <person name="Brans A."/>
            <person name="Braun M."/>
            <person name="Brignell S.C."/>
            <person name="Bron S."/>
            <person name="Brouillet S."/>
            <person name="Bruschi C.V."/>
            <person name="Caldwell B."/>
            <person name="Capuano V."/>
            <person name="Carter N.M."/>
            <person name="Choi S.-K."/>
            <person name="Codani J.-J."/>
            <person name="Connerton I.F."/>
            <person name="Cummings N.J."/>
            <person name="Daniel R.A."/>
            <person name="Denizot F."/>
            <person name="Devine K.M."/>
            <person name="Duesterhoeft A."/>
            <person name="Ehrlich S.D."/>
            <person name="Emmerson P.T."/>
            <person name="Entian K.-D."/>
            <person name="Errington J."/>
            <person name="Fabret C."/>
            <person name="Ferrari E."/>
            <person name="Foulger D."/>
            <person name="Fritz C."/>
            <person name="Fujita M."/>
            <person name="Fujita Y."/>
            <person name="Fuma S."/>
            <person name="Galizzi A."/>
            <person name="Galleron N."/>
            <person name="Ghim S.-Y."/>
            <person name="Glaser P."/>
            <person name="Goffeau A."/>
            <person name="Golightly E.J."/>
            <person name="Grandi G."/>
            <person name="Guiseppi G."/>
            <person name="Guy B.J."/>
            <person name="Haga K."/>
            <person name="Haiech J."/>
            <person name="Harwood C.R."/>
            <person name="Henaut A."/>
            <person name="Hilbert H."/>
            <person name="Holsappel S."/>
            <person name="Hosono S."/>
            <person name="Hullo M.-F."/>
            <person name="Itaya M."/>
            <person name="Jones L.-M."/>
            <person name="Joris B."/>
            <person name="Karamata D."/>
            <person name="Kasahara Y."/>
            <person name="Klaerr-Blanchard M."/>
            <person name="Klein C."/>
            <person name="Kobayashi Y."/>
            <person name="Koetter P."/>
            <person name="Koningstein G."/>
            <person name="Krogh S."/>
            <person name="Kumano M."/>
            <person name="Kurita K."/>
            <person name="Lapidus A."/>
            <person name="Lardinois S."/>
            <person name="Lauber J."/>
            <person name="Lazarevic V."/>
            <person name="Lee S.-M."/>
            <person name="Levine A."/>
            <person name="Liu H."/>
            <person name="Masuda S."/>
            <person name="Mauel C."/>
            <person name="Medigue C."/>
            <person name="Medina N."/>
            <person name="Mellado R.P."/>
            <person name="Mizuno M."/>
            <person name="Moestl D."/>
            <person name="Nakai S."/>
            <person name="Noback M."/>
            <person name="Noone D."/>
            <person name="O'Reilly M."/>
            <person name="Ogawa K."/>
            <person name="Ogiwara A."/>
            <person name="Oudega B."/>
            <person name="Park S.-H."/>
            <person name="Parro V."/>
            <person name="Pohl T.M."/>
            <person name="Portetelle D."/>
            <person name="Porwollik S."/>
            <person name="Prescott A.M."/>
            <person name="Presecan E."/>
            <person name="Pujic P."/>
            <person name="Purnelle B."/>
            <person name="Rapoport G."/>
            <person name="Rey M."/>
            <person name="Reynolds S."/>
            <person name="Rieger M."/>
            <person name="Rivolta C."/>
            <person name="Rocha E."/>
            <person name="Roche B."/>
            <person name="Rose M."/>
            <person name="Sadaie Y."/>
            <person name="Sato T."/>
            <person name="Scanlan E."/>
            <person name="Schleich S."/>
            <person name="Schroeter R."/>
            <person name="Scoffone F."/>
            <person name="Sekiguchi J."/>
            <person name="Sekowska A."/>
            <person name="Seror S.J."/>
            <person name="Serror P."/>
            <person name="Shin B.-S."/>
            <person name="Soldo B."/>
            <person name="Sorokin A."/>
            <person name="Tacconi E."/>
            <person name="Takagi T."/>
            <person name="Takahashi H."/>
            <person name="Takemaru K."/>
            <person name="Takeuchi M."/>
            <person name="Tamakoshi A."/>
            <person name="Tanaka T."/>
            <person name="Terpstra P."/>
            <person name="Tognoni A."/>
            <person name="Tosato V."/>
            <person name="Uchiyama S."/>
            <person name="Vandenbol M."/>
            <person name="Vannier F."/>
            <person name="Vassarotti A."/>
            <person name="Viari A."/>
            <person name="Wambutt R."/>
            <person name="Wedler E."/>
            <person name="Wedler H."/>
            <person name="Weitzenegger T."/>
            <person name="Winters P."/>
            <person name="Wipat A."/>
            <person name="Yamamoto H."/>
            <person name="Yamane K."/>
            <person name="Yasumoto K."/>
            <person name="Yata K."/>
            <person name="Yoshida K."/>
            <person name="Yoshikawa H.-F."/>
            <person name="Zumstein E."/>
            <person name="Yoshikawa H."/>
            <person name="Danchin A."/>
        </authorList>
    </citation>
    <scope>NUCLEOTIDE SEQUENCE [LARGE SCALE GENOMIC DNA]</scope>
    <source>
        <strain>168</strain>
    </source>
</reference>
<reference key="3">
    <citation type="journal article" date="1997" name="Electrophoresis">
        <title>First steps from a two-dimensional protein index towards a response-regulation map for Bacillus subtilis.</title>
        <authorList>
            <person name="Antelmann H."/>
            <person name="Bernhardt J."/>
            <person name="Schmid R."/>
            <person name="Mach H."/>
            <person name="Voelker U."/>
            <person name="Hecker M."/>
        </authorList>
    </citation>
    <scope>PROTEIN SEQUENCE OF 1-25</scope>
    <scope>INDUCTION</scope>
    <source>
        <strain>168 / IS58</strain>
    </source>
</reference>
<reference key="4">
    <citation type="journal article" date="2003" name="Acta Crystallogr. D">
        <title>Expression, crystallization and activities of the two family 11 aldo-keto reductases from Bacillus subtilis.</title>
        <authorList>
            <person name="Ehrensberger A."/>
            <person name="Wilson D.K."/>
        </authorList>
    </citation>
    <scope>FUNCTION</scope>
    <scope>CATALYTIC ACTIVITY</scope>
    <scope>BIOPHYSICOCHEMICAL PROPERTIES</scope>
    <scope>SUBUNIT</scope>
</reference>
<reference key="5">
    <citation type="journal article" date="2004" name="J. Mol. Biol.">
        <title>Structural and catalytic diversity in the two family 11 aldo-keto reductases.</title>
        <authorList>
            <person name="Ehrensberger A.H."/>
            <person name="Wilson D.K."/>
        </authorList>
    </citation>
    <scope>X-RAY CRYSTALLOGRAPHY (2.2 ANGSTROMS) IN COMPLEX WITH NADP</scope>
    <scope>FUNCTION</scope>
    <scope>CATALYTIC ACTIVITY</scope>
    <scope>SUBSTRATE SPECIFICITY</scope>
    <scope>BIOPHYSICOCHEMICAL PROPERTIES</scope>
    <scope>ACTIVE SITE</scope>
    <scope>REACTION MECHANISM</scope>
</reference>
<accession>P80874</accession>
<accession>O07583</accession>
<sequence>MEYTSIADTGIEASRIGLGTWAIGGTMWGGTDEKTSIETIRAALDQGITLIDTAPAYGFGQSEEIVGKAIKEYGKRDQVILATKTALDWKNNQLFRHANRARIVEEVENSLKRLQTDYIDLYQVHWPDPLVPIEETAEVMKELYDAGKIRAIGVSNFSIEQMDTFRAVAPLHTIQPPYNLFEREMEESVLPYAKDNKITTLLYGSLCRGLLTGKMTEEYTFEGDDLRNHDPKFQKPRFKEYLSAVNQLDKLAKTRYGKSVIHLAVRWILDQPGADIALWGARKPGQLEALSEITGWTLNSEDQKDINTILENTISDPVGPEFMAPPTREEI</sequence>